<gene>
    <name evidence="1" type="primary">FEN1</name>
    <name type="ORF">BBOV_I000370</name>
</gene>
<reference key="1">
    <citation type="journal article" date="2007" name="PLoS Pathog.">
        <title>Genome sequence of Babesia bovis and comparative analysis of apicomplexan hemoprotozoa.</title>
        <authorList>
            <person name="Brayton K.A."/>
            <person name="Lau A.O.T."/>
            <person name="Herndon D.R."/>
            <person name="Hannick L."/>
            <person name="Kappmeyer L.S."/>
            <person name="Berens S.J."/>
            <person name="Bidwell S.L."/>
            <person name="Brown W.C."/>
            <person name="Crabtree J."/>
            <person name="Fadrosh D."/>
            <person name="Feldblum T."/>
            <person name="Forberger H.A."/>
            <person name="Haas B.J."/>
            <person name="Howell J.M."/>
            <person name="Khouri H."/>
            <person name="Koo H."/>
            <person name="Mann D.J."/>
            <person name="Norimine J."/>
            <person name="Paulsen I.T."/>
            <person name="Radune D."/>
            <person name="Ren Q."/>
            <person name="Smith R.K. Jr."/>
            <person name="Suarez C.E."/>
            <person name="White O."/>
            <person name="Wortman J.R."/>
            <person name="Knowles D.P. Jr."/>
            <person name="McElwain T.F."/>
            <person name="Nene V.M."/>
        </authorList>
    </citation>
    <scope>NUCLEOTIDE SEQUENCE [LARGE SCALE GENOMIC DNA]</scope>
    <source>
        <strain>T2Bo</strain>
    </source>
</reference>
<evidence type="ECO:0000255" key="1">
    <source>
        <dbReference type="HAMAP-Rule" id="MF_03140"/>
    </source>
</evidence>
<evidence type="ECO:0000256" key="2">
    <source>
        <dbReference type="SAM" id="MobiDB-lite"/>
    </source>
</evidence>
<dbReference type="EC" id="3.1.-.-" evidence="1"/>
<dbReference type="EMBL" id="AAXT02000002">
    <property type="protein sequence ID" value="EDO05131.1"/>
    <property type="molecule type" value="Genomic_DNA"/>
</dbReference>
<dbReference type="RefSeq" id="XP_001608699.1">
    <property type="nucleotide sequence ID" value="XM_001608649.1"/>
</dbReference>
<dbReference type="SMR" id="A7AX58"/>
<dbReference type="STRING" id="5865.A7AX58"/>
<dbReference type="EnsemblProtists" id="EDO05131">
    <property type="protein sequence ID" value="EDO05131"/>
    <property type="gene ID" value="BBOV_I000370"/>
</dbReference>
<dbReference type="GeneID" id="5476902"/>
<dbReference type="KEGG" id="bbo:BBOV_I000370"/>
<dbReference type="VEuPathDB" id="PiroplasmaDB:BBOV_I000370"/>
<dbReference type="eggNOG" id="KOG2519">
    <property type="taxonomic scope" value="Eukaryota"/>
</dbReference>
<dbReference type="InParanoid" id="A7AX58"/>
<dbReference type="OMA" id="INFREAR"/>
<dbReference type="Proteomes" id="UP000002173">
    <property type="component" value="Unassembled WGS sequence"/>
</dbReference>
<dbReference type="GO" id="GO:0005739">
    <property type="term" value="C:mitochondrion"/>
    <property type="evidence" value="ECO:0007669"/>
    <property type="project" value="UniProtKB-SubCell"/>
</dbReference>
<dbReference type="GO" id="GO:0005730">
    <property type="term" value="C:nucleolus"/>
    <property type="evidence" value="ECO:0007669"/>
    <property type="project" value="UniProtKB-SubCell"/>
</dbReference>
<dbReference type="GO" id="GO:0005654">
    <property type="term" value="C:nucleoplasm"/>
    <property type="evidence" value="ECO:0007669"/>
    <property type="project" value="UniProtKB-SubCell"/>
</dbReference>
<dbReference type="GO" id="GO:0008409">
    <property type="term" value="F:5'-3' exonuclease activity"/>
    <property type="evidence" value="ECO:0007669"/>
    <property type="project" value="UniProtKB-UniRule"/>
</dbReference>
<dbReference type="GO" id="GO:0017108">
    <property type="term" value="F:5'-flap endonuclease activity"/>
    <property type="evidence" value="ECO:0007669"/>
    <property type="project" value="UniProtKB-UniRule"/>
</dbReference>
<dbReference type="GO" id="GO:0003677">
    <property type="term" value="F:DNA binding"/>
    <property type="evidence" value="ECO:0007669"/>
    <property type="project" value="UniProtKB-UniRule"/>
</dbReference>
<dbReference type="GO" id="GO:0000287">
    <property type="term" value="F:magnesium ion binding"/>
    <property type="evidence" value="ECO:0007669"/>
    <property type="project" value="UniProtKB-UniRule"/>
</dbReference>
<dbReference type="GO" id="GO:0006284">
    <property type="term" value="P:base-excision repair"/>
    <property type="evidence" value="ECO:0007669"/>
    <property type="project" value="UniProtKB-UniRule"/>
</dbReference>
<dbReference type="GO" id="GO:0043137">
    <property type="term" value="P:DNA replication, removal of RNA primer"/>
    <property type="evidence" value="ECO:0007669"/>
    <property type="project" value="UniProtKB-UniRule"/>
</dbReference>
<dbReference type="CDD" id="cd09867">
    <property type="entry name" value="PIN_FEN1"/>
    <property type="match status" value="1"/>
</dbReference>
<dbReference type="FunFam" id="1.10.150.20:FF:000009">
    <property type="entry name" value="Flap endonuclease 1"/>
    <property type="match status" value="1"/>
</dbReference>
<dbReference type="FunFam" id="3.40.50.1010:FF:000016">
    <property type="entry name" value="Flap endonuclease 1"/>
    <property type="match status" value="1"/>
</dbReference>
<dbReference type="Gene3D" id="1.10.150.20">
    <property type="entry name" value="5' to 3' exonuclease, C-terminal subdomain"/>
    <property type="match status" value="1"/>
</dbReference>
<dbReference type="Gene3D" id="3.40.50.1010">
    <property type="entry name" value="5'-nuclease"/>
    <property type="match status" value="1"/>
</dbReference>
<dbReference type="HAMAP" id="MF_00614">
    <property type="entry name" value="Fen"/>
    <property type="match status" value="1"/>
</dbReference>
<dbReference type="InterPro" id="IPR002421">
    <property type="entry name" value="5-3_exonuclease"/>
</dbReference>
<dbReference type="InterPro" id="IPR036279">
    <property type="entry name" value="5-3_exonuclease_C_sf"/>
</dbReference>
<dbReference type="InterPro" id="IPR023426">
    <property type="entry name" value="Flap_endonuc"/>
</dbReference>
<dbReference type="InterPro" id="IPR008918">
    <property type="entry name" value="HhH2"/>
</dbReference>
<dbReference type="InterPro" id="IPR029060">
    <property type="entry name" value="PIN-like_dom_sf"/>
</dbReference>
<dbReference type="InterPro" id="IPR006086">
    <property type="entry name" value="XPG-I_dom"/>
</dbReference>
<dbReference type="InterPro" id="IPR006084">
    <property type="entry name" value="XPG/Rad2"/>
</dbReference>
<dbReference type="InterPro" id="IPR006085">
    <property type="entry name" value="XPG_DNA_repair_N"/>
</dbReference>
<dbReference type="PANTHER" id="PTHR11081:SF9">
    <property type="entry name" value="FLAP ENDONUCLEASE 1"/>
    <property type="match status" value="1"/>
</dbReference>
<dbReference type="PANTHER" id="PTHR11081">
    <property type="entry name" value="FLAP ENDONUCLEASE FAMILY MEMBER"/>
    <property type="match status" value="1"/>
</dbReference>
<dbReference type="Pfam" id="PF00867">
    <property type="entry name" value="XPG_I"/>
    <property type="match status" value="1"/>
</dbReference>
<dbReference type="Pfam" id="PF00752">
    <property type="entry name" value="XPG_N"/>
    <property type="match status" value="1"/>
</dbReference>
<dbReference type="PRINTS" id="PR00853">
    <property type="entry name" value="XPGRADSUPER"/>
</dbReference>
<dbReference type="SMART" id="SM00475">
    <property type="entry name" value="53EXOc"/>
    <property type="match status" value="1"/>
</dbReference>
<dbReference type="SMART" id="SM00279">
    <property type="entry name" value="HhH2"/>
    <property type="match status" value="1"/>
</dbReference>
<dbReference type="SMART" id="SM00484">
    <property type="entry name" value="XPGI"/>
    <property type="match status" value="1"/>
</dbReference>
<dbReference type="SMART" id="SM00485">
    <property type="entry name" value="XPGN"/>
    <property type="match status" value="1"/>
</dbReference>
<dbReference type="SUPFAM" id="SSF47807">
    <property type="entry name" value="5' to 3' exonuclease, C-terminal subdomain"/>
    <property type="match status" value="1"/>
</dbReference>
<dbReference type="SUPFAM" id="SSF88723">
    <property type="entry name" value="PIN domain-like"/>
    <property type="match status" value="1"/>
</dbReference>
<organism>
    <name type="scientific">Babesia bovis</name>
    <dbReference type="NCBI Taxonomy" id="5865"/>
    <lineage>
        <taxon>Eukaryota</taxon>
        <taxon>Sar</taxon>
        <taxon>Alveolata</taxon>
        <taxon>Apicomplexa</taxon>
        <taxon>Aconoidasida</taxon>
        <taxon>Piroplasmida</taxon>
        <taxon>Babesiidae</taxon>
        <taxon>Babesia</taxon>
    </lineage>
</organism>
<comment type="function">
    <text evidence="1">Structure-specific nuclease with 5'-flap endonuclease and 5'-3' exonuclease activities involved in DNA replication and repair. During DNA replication, cleaves the 5'-overhanging flap structure that is generated by displacement synthesis when DNA polymerase encounters the 5'-end of a downstream Okazaki fragment. It enters the flap from the 5'-end and then tracks to cleave the flap base, leaving a nick for ligation. Also involved in the long patch base excision repair (LP-BER) pathway, by cleaving within the apurinic/apyrimidinic (AP) site-terminated flap. Acts as a genome stabilization factor that prevents flaps from equilibrating into structures that lead to duplications and deletions. Also possesses 5'-3' exonuclease activity on nicked or gapped double-stranded DNA, and exhibits RNase H activity. Also involved in replication and repair of rDNA and in repairing mitochondrial DNA.</text>
</comment>
<comment type="cofactor">
    <cofactor evidence="1">
        <name>Mg(2+)</name>
        <dbReference type="ChEBI" id="CHEBI:18420"/>
    </cofactor>
    <text evidence="1">Binds 2 magnesium ions per subunit. They probably participate in the reaction catalyzed by the enzyme. May bind an additional third magnesium ion after substrate binding.</text>
</comment>
<comment type="subunit">
    <text evidence="1">Interacts with PCNA. Three molecules of FEN1 bind to one PCNA trimer with each molecule binding to one PCNA monomer. PCNA stimulates the nuclease activity without altering cleavage specificity.</text>
</comment>
<comment type="subcellular location">
    <subcellularLocation>
        <location evidence="1">Nucleus</location>
        <location evidence="1">Nucleolus</location>
    </subcellularLocation>
    <subcellularLocation>
        <location evidence="1">Nucleus</location>
        <location evidence="1">Nucleoplasm</location>
    </subcellularLocation>
    <subcellularLocation>
        <location evidence="1">Mitochondrion</location>
    </subcellularLocation>
    <text evidence="1">Resides mostly in the nucleoli and relocalizes to the nucleoplasm upon DNA damage.</text>
</comment>
<comment type="PTM">
    <text evidence="1">Phosphorylated. Phosphorylation upon DNA damage induces relocalization to the nuclear plasma.</text>
</comment>
<comment type="similarity">
    <text evidence="1">Belongs to the XPG/RAD2 endonuclease family. FEN1 subfamily.</text>
</comment>
<name>FEN1_BABBO</name>
<feature type="chain" id="PRO_0000403531" description="Flap endonuclease 1">
    <location>
        <begin position="1"/>
        <end position="672"/>
    </location>
</feature>
<feature type="region of interest" description="N-domain">
    <location>
        <begin position="1"/>
        <end position="106"/>
    </location>
</feature>
<feature type="region of interest" description="I-domain">
    <location>
        <begin position="124"/>
        <end position="252"/>
    </location>
</feature>
<feature type="region of interest" description="Interaction with PCNA" evidence="1">
    <location>
        <begin position="327"/>
        <end position="335"/>
    </location>
</feature>
<feature type="region of interest" description="Disordered" evidence="2">
    <location>
        <begin position="361"/>
        <end position="436"/>
    </location>
</feature>
<feature type="compositionally biased region" description="Basic and acidic residues" evidence="2">
    <location>
        <begin position="370"/>
        <end position="382"/>
    </location>
</feature>
<feature type="binding site" evidence="1">
    <location>
        <position position="34"/>
    </location>
    <ligand>
        <name>Mg(2+)</name>
        <dbReference type="ChEBI" id="CHEBI:18420"/>
        <label>1</label>
    </ligand>
</feature>
<feature type="binding site" evidence="1">
    <location>
        <position position="47"/>
    </location>
    <ligand>
        <name>DNA</name>
        <dbReference type="ChEBI" id="CHEBI:16991"/>
    </ligand>
</feature>
<feature type="binding site" evidence="1">
    <location>
        <position position="72"/>
    </location>
    <ligand>
        <name>DNA</name>
        <dbReference type="ChEBI" id="CHEBI:16991"/>
    </ligand>
</feature>
<feature type="binding site" evidence="1">
    <location>
        <position position="88"/>
    </location>
    <ligand>
        <name>Mg(2+)</name>
        <dbReference type="ChEBI" id="CHEBI:18420"/>
        <label>1</label>
    </ligand>
</feature>
<feature type="binding site" evidence="1">
    <location>
        <position position="160"/>
    </location>
    <ligand>
        <name>DNA</name>
        <dbReference type="ChEBI" id="CHEBI:16991"/>
    </ligand>
</feature>
<feature type="binding site" evidence="1">
    <location>
        <position position="160"/>
    </location>
    <ligand>
        <name>Mg(2+)</name>
        <dbReference type="ChEBI" id="CHEBI:18420"/>
        <label>1</label>
    </ligand>
</feature>
<feature type="binding site" evidence="1">
    <location>
        <position position="162"/>
    </location>
    <ligand>
        <name>Mg(2+)</name>
        <dbReference type="ChEBI" id="CHEBI:18420"/>
        <label>1</label>
    </ligand>
</feature>
<feature type="binding site" evidence="1">
    <location>
        <position position="181"/>
    </location>
    <ligand>
        <name>Mg(2+)</name>
        <dbReference type="ChEBI" id="CHEBI:18420"/>
        <label>2</label>
    </ligand>
</feature>
<feature type="binding site" evidence="1">
    <location>
        <position position="183"/>
    </location>
    <ligand>
        <name>Mg(2+)</name>
        <dbReference type="ChEBI" id="CHEBI:18420"/>
        <label>2</label>
    </ligand>
</feature>
<feature type="binding site" evidence="1">
    <location>
        <position position="230"/>
    </location>
    <ligand>
        <name>DNA</name>
        <dbReference type="ChEBI" id="CHEBI:16991"/>
    </ligand>
</feature>
<feature type="binding site" evidence="1">
    <location>
        <position position="232"/>
    </location>
    <ligand>
        <name>DNA</name>
        <dbReference type="ChEBI" id="CHEBI:16991"/>
    </ligand>
</feature>
<feature type="binding site" evidence="1">
    <location>
        <position position="232"/>
    </location>
    <ligand>
        <name>Mg(2+)</name>
        <dbReference type="ChEBI" id="CHEBI:18420"/>
        <label>2</label>
    </ligand>
</feature>
<accession>A7AX58</accession>
<protein>
    <recommendedName>
        <fullName evidence="1">Flap endonuclease 1</fullName>
        <shortName evidence="1">FEN-1</shortName>
        <ecNumber evidence="1">3.1.-.-</ecNumber>
    </recommendedName>
    <alternativeName>
        <fullName evidence="1">Flap structure-specific endonuclease 1</fullName>
    </alternativeName>
</protein>
<sequence>MGIKGLIGFLSDAAPGCISEVTLESLSGTSIAIDASTALYQFTIAIREGSYLSSLTNSKGESTSHIAGLLNRCIRLLELGIRPVFVFDSTPPEAKSQTLAKRKLLREEAESSLEKAIEEDDKEAIRKYVGRTVRITQKENESAKKLLRLVGVPVIEAAEEAEAQCAYLCQRGFVTAVGSEDADALVFRCGVLLKNLTASNKPVVRVDLAKALELLELTHEQFTDFCILCGCDYCGTLKGVGPKTAYNLIKKHGSISRILEVRSETLEGYEAAQEYFRDPKVRDITTIDRCEANIDGLREFLISENDFSEERVDKLIERLQKARSKKTQLSLKSFFGYPPRAANITRNYTVPIKGVSPPAVVESAVDSTSDDGKDEVPSDDKVPSVNEVPTVDKVPSVNEVPTVEEAPPADAVPTVEDTSEPPSEEPDAKKRNKRVPIEVDDSLVPDNLKRFICVQHYDPRVTIKRTGASELGSDSVDSLVSHICGVYGIQSGTPDNDLSVVGEGILWPNPILQRFRSVTKDLPNSRLHELWRCSSSHGISWDALDKLYINFREARDSSVEEWDKYAPEIVDFASKVARDKITQWLDGSTSCPPRLLRRWTHLLYSRWRERYLHVYGPRMLSRYLKGEVTDRVLVREINECLPAGVECSELPLDTEPSEHNPHFVRRVPKSGS</sequence>
<keyword id="KW-0227">DNA damage</keyword>
<keyword id="KW-0234">DNA repair</keyword>
<keyword id="KW-0235">DNA replication</keyword>
<keyword id="KW-0255">Endonuclease</keyword>
<keyword id="KW-0269">Exonuclease</keyword>
<keyword id="KW-0378">Hydrolase</keyword>
<keyword id="KW-0460">Magnesium</keyword>
<keyword id="KW-0479">Metal-binding</keyword>
<keyword id="KW-0496">Mitochondrion</keyword>
<keyword id="KW-0540">Nuclease</keyword>
<keyword id="KW-0539">Nucleus</keyword>
<keyword id="KW-0597">Phosphoprotein</keyword>
<keyword id="KW-1185">Reference proteome</keyword>
<proteinExistence type="inferred from homology"/>